<accession>A4ITV2</accession>
<organism>
    <name type="scientific">Geobacillus thermodenitrificans (strain NG80-2)</name>
    <dbReference type="NCBI Taxonomy" id="420246"/>
    <lineage>
        <taxon>Bacteria</taxon>
        <taxon>Bacillati</taxon>
        <taxon>Bacillota</taxon>
        <taxon>Bacilli</taxon>
        <taxon>Bacillales</taxon>
        <taxon>Anoxybacillaceae</taxon>
        <taxon>Geobacillus</taxon>
    </lineage>
</organism>
<dbReference type="EC" id="3.1.4.59" evidence="1"/>
<dbReference type="EMBL" id="CP000557">
    <property type="protein sequence ID" value="ABO68756.1"/>
    <property type="molecule type" value="Genomic_DNA"/>
</dbReference>
<dbReference type="RefSeq" id="WP_011888454.1">
    <property type="nucleotide sequence ID" value="NC_009328.1"/>
</dbReference>
<dbReference type="PDB" id="2M1C">
    <property type="method" value="NMR"/>
    <property type="chains" value="A/B=55-162"/>
</dbReference>
<dbReference type="PDBsum" id="2M1C"/>
<dbReference type="SMR" id="A4ITV2"/>
<dbReference type="KEGG" id="gtn:GTNG_3419"/>
<dbReference type="eggNOG" id="COG3887">
    <property type="taxonomic scope" value="Bacteria"/>
</dbReference>
<dbReference type="HOGENOM" id="CLU_018278_0_0_9"/>
<dbReference type="BRENDA" id="3.1.4.59">
    <property type="organism ID" value="705"/>
</dbReference>
<dbReference type="EvolutionaryTrace" id="A4ITV2"/>
<dbReference type="Proteomes" id="UP000001578">
    <property type="component" value="Chromosome"/>
</dbReference>
<dbReference type="GO" id="GO:0005886">
    <property type="term" value="C:plasma membrane"/>
    <property type="evidence" value="ECO:0007669"/>
    <property type="project" value="UniProtKB-SubCell"/>
</dbReference>
<dbReference type="GO" id="GO:0106409">
    <property type="term" value="F:cyclic-di-AMP phosphodiesterase activity"/>
    <property type="evidence" value="ECO:0007669"/>
    <property type="project" value="UniProtKB-EC"/>
</dbReference>
<dbReference type="GO" id="GO:0016787">
    <property type="term" value="F:hydrolase activity"/>
    <property type="evidence" value="ECO:0007669"/>
    <property type="project" value="UniProtKB-KW"/>
</dbReference>
<dbReference type="GO" id="GO:0046872">
    <property type="term" value="F:metal ion binding"/>
    <property type="evidence" value="ECO:0007669"/>
    <property type="project" value="UniProtKB-KW"/>
</dbReference>
<dbReference type="GO" id="GO:0003676">
    <property type="term" value="F:nucleic acid binding"/>
    <property type="evidence" value="ECO:0007669"/>
    <property type="project" value="InterPro"/>
</dbReference>
<dbReference type="FunFam" id="3.10.310.30:FF:000002">
    <property type="entry name" value="Cyclic-di-AMP phosphodiesterase"/>
    <property type="match status" value="1"/>
</dbReference>
<dbReference type="FunFam" id="3.90.1640.10:FF:000002">
    <property type="entry name" value="Cyclic-di-AMP phosphodiesterase"/>
    <property type="match status" value="1"/>
</dbReference>
<dbReference type="Gene3D" id="3.10.310.30">
    <property type="match status" value="1"/>
</dbReference>
<dbReference type="Gene3D" id="3.90.1640.10">
    <property type="entry name" value="inorganic pyrophosphatase (n-terminal core)"/>
    <property type="match status" value="1"/>
</dbReference>
<dbReference type="Gene3D" id="3.30.450.20">
    <property type="entry name" value="PAS domain"/>
    <property type="match status" value="1"/>
</dbReference>
<dbReference type="InterPro" id="IPR001667">
    <property type="entry name" value="DDH_dom"/>
</dbReference>
<dbReference type="InterPro" id="IPR038763">
    <property type="entry name" value="DHH_sf"/>
</dbReference>
<dbReference type="InterPro" id="IPR003156">
    <property type="entry name" value="DHHA1_dom"/>
</dbReference>
<dbReference type="InterPro" id="IPR049553">
    <property type="entry name" value="GdpP-like_PAS"/>
</dbReference>
<dbReference type="InterPro" id="IPR014528">
    <property type="entry name" value="GdpP/PdeA"/>
</dbReference>
<dbReference type="InterPro" id="IPR000160">
    <property type="entry name" value="GGDEF_dom"/>
</dbReference>
<dbReference type="InterPro" id="IPR051319">
    <property type="entry name" value="Oligoribo/pAp-PDE_c-di-AMP_PDE"/>
</dbReference>
<dbReference type="PANTHER" id="PTHR47618">
    <property type="entry name" value="BIFUNCTIONAL OLIGORIBONUCLEASE AND PAP PHOSPHATASE NRNA"/>
    <property type="match status" value="1"/>
</dbReference>
<dbReference type="PANTHER" id="PTHR47618:SF2">
    <property type="entry name" value="CYCLIC-DI-AMP PHOSPHODIESTERASE GDPP"/>
    <property type="match status" value="1"/>
</dbReference>
<dbReference type="Pfam" id="PF01368">
    <property type="entry name" value="DHH"/>
    <property type="match status" value="1"/>
</dbReference>
<dbReference type="Pfam" id="PF02272">
    <property type="entry name" value="DHHA1"/>
    <property type="match status" value="1"/>
</dbReference>
<dbReference type="Pfam" id="PF24898">
    <property type="entry name" value="GGDEF_GdpP"/>
    <property type="match status" value="1"/>
</dbReference>
<dbReference type="Pfam" id="PF21370">
    <property type="entry name" value="PAS_GdpP"/>
    <property type="match status" value="1"/>
</dbReference>
<dbReference type="PIRSF" id="PIRSF026583">
    <property type="entry name" value="YybT"/>
    <property type="match status" value="1"/>
</dbReference>
<dbReference type="SMART" id="SM00267">
    <property type="entry name" value="GGDEF"/>
    <property type="match status" value="1"/>
</dbReference>
<dbReference type="SUPFAM" id="SSF64182">
    <property type="entry name" value="DHH phosphoesterases"/>
    <property type="match status" value="1"/>
</dbReference>
<dbReference type="PROSITE" id="PS50887">
    <property type="entry name" value="GGDEF"/>
    <property type="match status" value="1"/>
</dbReference>
<feature type="chain" id="PRO_0000436053" description="Cyclic-di-AMP phosphodiesterase GdpP">
    <location>
        <begin position="1"/>
        <end position="658"/>
    </location>
</feature>
<feature type="transmembrane region" description="Helical" evidence="2">
    <location>
        <begin position="12"/>
        <end position="32"/>
    </location>
</feature>
<feature type="transmembrane region" description="Helical" evidence="2">
    <location>
        <begin position="33"/>
        <end position="53"/>
    </location>
</feature>
<feature type="domain" description="GGDEF" evidence="3">
    <location>
        <begin position="174"/>
        <end position="302"/>
    </location>
</feature>
<feature type="region of interest" description="PAS-like" evidence="6">
    <location>
        <begin position="83"/>
        <end position="162"/>
    </location>
</feature>
<feature type="region of interest" description="DHH" evidence="7">
    <location>
        <begin position="340"/>
        <end position="497"/>
    </location>
</feature>
<feature type="region of interest" description="DHHA1" evidence="7">
    <location>
        <begin position="590"/>
        <end position="646"/>
    </location>
</feature>
<feature type="binding site" evidence="1">
    <location>
        <position position="346"/>
    </location>
    <ligand>
        <name>Mn(2+)</name>
        <dbReference type="ChEBI" id="CHEBI:29035"/>
        <label>1</label>
    </ligand>
</feature>
<feature type="binding site" evidence="1">
    <location>
        <position position="350"/>
    </location>
    <ligand>
        <name>Mn(2+)</name>
        <dbReference type="ChEBI" id="CHEBI:29035"/>
        <label>1</label>
    </ligand>
</feature>
<feature type="binding site" evidence="1">
    <location>
        <position position="352"/>
    </location>
    <ligand>
        <name>Mn(2+)</name>
        <dbReference type="ChEBI" id="CHEBI:29035"/>
        <label>2</label>
    </ligand>
</feature>
<feature type="binding site" evidence="1">
    <location>
        <position position="421"/>
    </location>
    <ligand>
        <name>Mn(2+)</name>
        <dbReference type="ChEBI" id="CHEBI:29035"/>
        <label>1</label>
    </ligand>
</feature>
<feature type="binding site" evidence="1">
    <location>
        <position position="421"/>
    </location>
    <ligand>
        <name>Mn(2+)</name>
        <dbReference type="ChEBI" id="CHEBI:29035"/>
        <label>2</label>
    </ligand>
</feature>
<feature type="binding site" evidence="1">
    <location>
        <position position="445"/>
    </location>
    <ligand>
        <name>Mn(2+)</name>
        <dbReference type="ChEBI" id="CHEBI:29035"/>
        <label>2</label>
    </ligand>
</feature>
<feature type="binding site" evidence="1">
    <location>
        <position position="500"/>
    </location>
    <ligand>
        <name>Mn(2+)</name>
        <dbReference type="ChEBI" id="CHEBI:29035"/>
        <label>2</label>
    </ligand>
</feature>
<feature type="mutagenesis site" description="Loss of heme b binding (by fragment with residues 55-162)." evidence="4">
    <original>F</original>
    <variation>A</variation>
    <location>
        <position position="107"/>
    </location>
</feature>
<feature type="helix" evidence="9">
    <location>
        <begin position="59"/>
        <end position="64"/>
    </location>
</feature>
<feature type="strand" evidence="9">
    <location>
        <begin position="65"/>
        <end position="68"/>
    </location>
</feature>
<feature type="turn" evidence="9">
    <location>
        <begin position="74"/>
        <end position="78"/>
    </location>
</feature>
<feature type="strand" evidence="9">
    <location>
        <begin position="80"/>
        <end position="83"/>
    </location>
</feature>
<feature type="strand" evidence="9">
    <location>
        <begin position="87"/>
        <end position="90"/>
    </location>
</feature>
<feature type="strand" evidence="9">
    <location>
        <begin position="92"/>
        <end position="94"/>
    </location>
</feature>
<feature type="strand" evidence="9">
    <location>
        <begin position="96"/>
        <end position="99"/>
    </location>
</feature>
<feature type="helix" evidence="9">
    <location>
        <begin position="102"/>
        <end position="105"/>
    </location>
</feature>
<feature type="turn" evidence="9">
    <location>
        <begin position="106"/>
        <end position="108"/>
    </location>
</feature>
<feature type="turn" evidence="9">
    <location>
        <begin position="116"/>
        <end position="120"/>
    </location>
</feature>
<feature type="helix" evidence="9">
    <location>
        <begin position="123"/>
        <end position="127"/>
    </location>
</feature>
<feature type="turn" evidence="9">
    <location>
        <begin position="128"/>
        <end position="130"/>
    </location>
</feature>
<feature type="strand" evidence="9">
    <location>
        <begin position="133"/>
        <end position="140"/>
    </location>
</feature>
<feature type="strand" evidence="9">
    <location>
        <begin position="143"/>
        <end position="148"/>
    </location>
</feature>
<feature type="strand" evidence="9">
    <location>
        <begin position="157"/>
        <end position="161"/>
    </location>
</feature>
<gene>
    <name type="primary">gdpP</name>
    <name evidence="6" type="synonym">yybT</name>
    <name type="ordered locus">GTNG_3419</name>
</gene>
<reference key="1">
    <citation type="journal article" date="2007" name="Proc. Natl. Acad. Sci. U.S.A.">
        <title>Genome and proteome of long-chain alkane degrading Geobacillus thermodenitrificans NG80-2 isolated from a deep-subsurface oil reservoir.</title>
        <authorList>
            <person name="Feng L."/>
            <person name="Wang W."/>
            <person name="Cheng J."/>
            <person name="Ren Y."/>
            <person name="Zhao G."/>
            <person name="Gao C."/>
            <person name="Tang Y."/>
            <person name="Liu X."/>
            <person name="Han W."/>
            <person name="Peng X."/>
            <person name="Liu R."/>
            <person name="Wang L."/>
        </authorList>
    </citation>
    <scope>NUCLEOTIDE SEQUENCE [LARGE SCALE GENOMIC DNA]</scope>
    <source>
        <strain>NG80-2</strain>
    </source>
</reference>
<reference key="2">
    <citation type="journal article" date="2011" name="J. Bacteriol.">
        <title>Unusual heme-binding PAS domain from YybT family proteins.</title>
        <authorList>
            <person name="Rao F."/>
            <person name="Ji Q."/>
            <person name="Soehano I."/>
            <person name="Liang Z.X."/>
        </authorList>
    </citation>
    <scope>COFACTOR</scope>
    <scope>DOMAIN</scope>
    <scope>MUTAGENESIS OF PHE-107</scope>
</reference>
<reference key="3">
    <citation type="journal article" date="2013" name="J. Biol. Chem.">
        <title>Solution structure of the PAS domain of a thermophilic YybT protein homolog reveals a potential ligand-binding site.</title>
        <authorList>
            <person name="Tan E."/>
            <person name="Rao F."/>
            <person name="Pasunooti S."/>
            <person name="Pham T.H."/>
            <person name="Soehano I."/>
            <person name="Turner M.S."/>
            <person name="Liew C.W."/>
            <person name="Lescar J."/>
            <person name="Pervushin K."/>
            <person name="Liang Z.X."/>
        </authorList>
    </citation>
    <scope>STRUCTURE BY NMR OF 55-162</scope>
    <scope>POSSIBLE SUBUNIT</scope>
</reference>
<comment type="function">
    <text evidence="1">Has phosphodiesterase (PDE) activity against cyclic-di-AMP (c-di-AMP) and to a much lesser extent against cyclic-di-GMP (c-di-GMP) in the DHH/DHHA1 domains. Also has ATPase activity, probably via the GGDEF domain. May monitor cellular heme or NO levels.</text>
</comment>
<comment type="catalytic activity">
    <reaction evidence="1">
        <text>3',3'-c-di-AMP + H2O = 5'-O-phosphonoadenylyl-(3'-&gt;5')-adenosine + H(+)</text>
        <dbReference type="Rhea" id="RHEA:54420"/>
        <dbReference type="ChEBI" id="CHEBI:15377"/>
        <dbReference type="ChEBI" id="CHEBI:15378"/>
        <dbReference type="ChEBI" id="CHEBI:71500"/>
        <dbReference type="ChEBI" id="CHEBI:138171"/>
        <dbReference type="EC" id="3.1.4.59"/>
    </reaction>
</comment>
<comment type="cofactor">
    <cofactor evidence="4 8">
        <name>heme b</name>
        <dbReference type="ChEBI" id="CHEBI:60344"/>
    </cofactor>
    <text evidence="4">Binds 1 heme b per subunit.</text>
</comment>
<comment type="cofactor">
    <cofactor evidence="1">
        <name>Mn(2+)</name>
        <dbReference type="ChEBI" id="CHEBI:29035"/>
    </cofactor>
    <text evidence="1">Probably binds 2 Mn(2+) per subunit.</text>
</comment>
<comment type="subunit">
    <text evidence="5">The PAS-like domain (residues 55-162) dimerizes.</text>
</comment>
<comment type="subcellular location">
    <subcellularLocation>
        <location evidence="2">Cell membrane</location>
        <topology evidence="2">Multi-pass membrane protein</topology>
    </subcellularLocation>
</comment>
<comment type="domain">
    <text evidence="4">Binds heme b via the PAS-like domain.</text>
</comment>
<comment type="similarity">
    <text evidence="7">Belongs to the GdpP/PdeA phosphodiesterase family.</text>
</comment>
<name>GDPP_GEOTN</name>
<proteinExistence type="evidence at protein level"/>
<protein>
    <recommendedName>
        <fullName>Cyclic-di-AMP phosphodiesterase GdpP</fullName>
        <shortName>c-di-AMP phosphodiesterase</shortName>
        <ecNumber evidence="1">3.1.4.59</ecNumber>
    </recommendedName>
</protein>
<evidence type="ECO:0000250" key="1">
    <source>
        <dbReference type="UniProtKB" id="P37484"/>
    </source>
</evidence>
<evidence type="ECO:0000255" key="2"/>
<evidence type="ECO:0000255" key="3">
    <source>
        <dbReference type="PROSITE-ProRule" id="PRU00095"/>
    </source>
</evidence>
<evidence type="ECO:0000269" key="4">
    <source>
    </source>
</evidence>
<evidence type="ECO:0000269" key="5">
    <source>
    </source>
</evidence>
<evidence type="ECO:0000303" key="6">
    <source>
    </source>
</evidence>
<evidence type="ECO:0000305" key="7"/>
<evidence type="ECO:0000305" key="8">
    <source>
    </source>
</evidence>
<evidence type="ECO:0007829" key="9">
    <source>
        <dbReference type="PDB" id="2M1C"/>
    </source>
</evidence>
<sequence length="658" mass="73706">MSHFYERKTYRYPSYALAALAVLMAVSLFYFQWMLGLVGLLGVGFLLYYVIWSQRSLHKELQQYISNLSYRVKKVSEEALMQMPIGILLLDEEDKIEWSNRFLAACFKEQTLIGRSLAELSEPLAAFVKKGKTDEEIIELNGKQLKVIVHRHERLLYFFDVTEHMELRRRYEIERLVLAIIFLDNYDEITQGMDDQAKSQMNSLVTSVLNRWANDYGIFLKRTSSDRFIAVLNEHILTQLEKSKFSILDEVREQTAKHQAQITLSIGIGAGVSSLPELGTLAQSSLDLALGRGGDQVAIKQGNGKVKFYGGKTNPMEKRTRVRARVISHALRELIAESDKVLIMGHKYPDMDALGAAIGILKVVQSNQKEGFLVVDAMKTDAGAQRLLEEMKKQADLWARCIKPEQALELITEDTLLIVVDTHRPSLVIEERLLYRADHIVVIDHHRRGEEFIEAPILVYMEPYASSTSELVTELLEYQPKRVKLSMLEATALLAGIVVDTKSFTLRTGSRTFDAASYLRAQGADTVLVQKLLRESVANYVKRAKLIERAAIDEHGIAIAKGDENEVHDQVLIAQTADTLLTLSGVVASFVISKRGDGTVGISARSLGDVNVQVIMERLGGGGHLTNAAAQLSDVTVGEAEQQLREAIHDYFEGGKPV</sequence>
<keyword id="KW-0002">3D-structure</keyword>
<keyword id="KW-1003">Cell membrane</keyword>
<keyword id="KW-0349">Heme</keyword>
<keyword id="KW-0378">Hydrolase</keyword>
<keyword id="KW-0408">Iron</keyword>
<keyword id="KW-0464">Manganese</keyword>
<keyword id="KW-0472">Membrane</keyword>
<keyword id="KW-0479">Metal-binding</keyword>
<keyword id="KW-0812">Transmembrane</keyword>
<keyword id="KW-1133">Transmembrane helix</keyword>